<gene>
    <name evidence="1" type="primary">UFL1</name>
    <name evidence="3" type="ORF">RCJMB04_2c12</name>
</gene>
<evidence type="ECO:0000250" key="1">
    <source>
        <dbReference type="UniProtKB" id="O94874"/>
    </source>
</evidence>
<evidence type="ECO:0000256" key="2">
    <source>
        <dbReference type="SAM" id="MobiDB-lite"/>
    </source>
</evidence>
<evidence type="ECO:0000303" key="3">
    <source>
    </source>
</evidence>
<evidence type="ECO:0000305" key="4"/>
<reference key="1">
    <citation type="journal article" date="2005" name="Genome Biol.">
        <title>Full-length cDNAs from chicken bursal lymphocytes to facilitate gene function analysis.</title>
        <authorList>
            <person name="Caldwell R.B."/>
            <person name="Kierzek A.M."/>
            <person name="Arakawa H."/>
            <person name="Bezzubov Y."/>
            <person name="Zaim J."/>
            <person name="Fiedler P."/>
            <person name="Kutter S."/>
            <person name="Blagodatski A."/>
            <person name="Kostovska D."/>
            <person name="Koter M."/>
            <person name="Plachy J."/>
            <person name="Carninci P."/>
            <person name="Hayashizaki Y."/>
            <person name="Buerstedde J.-M."/>
        </authorList>
    </citation>
    <scope>NUCLEOTIDE SEQUENCE [LARGE SCALE MRNA]</scope>
    <source>
        <strain>CB</strain>
        <tissue>Bursa of Fabricius</tissue>
    </source>
</reference>
<feature type="chain" id="PRO_0000050773" description="E3 UFM1-protein ligase 1">
    <location>
        <begin position="1"/>
        <end position="789"/>
    </location>
</feature>
<feature type="region of interest" description="Required for E3 UFM1-protein ligase activity" evidence="1">
    <location>
        <begin position="2"/>
        <end position="212"/>
    </location>
</feature>
<feature type="region of interest" description="Disordered" evidence="2">
    <location>
        <begin position="407"/>
        <end position="470"/>
    </location>
</feature>
<feature type="region of interest" description="Disordered" evidence="2">
    <location>
        <begin position="743"/>
        <end position="763"/>
    </location>
</feature>
<feature type="compositionally biased region" description="Basic residues" evidence="2">
    <location>
        <begin position="444"/>
        <end position="453"/>
    </location>
</feature>
<feature type="compositionally biased region" description="Acidic residues" evidence="2">
    <location>
        <begin position="748"/>
        <end position="760"/>
    </location>
</feature>
<dbReference type="EC" id="2.3.2.-" evidence="1"/>
<dbReference type="EMBL" id="AJ719423">
    <property type="protein sequence ID" value="CAG31082.1"/>
    <property type="molecule type" value="mRNA"/>
</dbReference>
<dbReference type="SMR" id="Q5ZMG1"/>
<dbReference type="FunCoup" id="Q5ZMG1">
    <property type="interactions" value="2619"/>
</dbReference>
<dbReference type="STRING" id="9031.ENSGALP00000025077"/>
<dbReference type="GlyGen" id="Q5ZMG1">
    <property type="glycosylation" value="1 site"/>
</dbReference>
<dbReference type="PaxDb" id="9031-ENSGALP00000025077"/>
<dbReference type="VEuPathDB" id="HostDB:geneid_421804"/>
<dbReference type="eggNOG" id="KOG2235">
    <property type="taxonomic scope" value="Eukaryota"/>
</dbReference>
<dbReference type="InParanoid" id="Q5ZMG1"/>
<dbReference type="OrthoDB" id="10258297at2759"/>
<dbReference type="PhylomeDB" id="Q5ZMG1"/>
<dbReference type="Proteomes" id="UP000000539">
    <property type="component" value="Unassembled WGS sequence"/>
</dbReference>
<dbReference type="GO" id="GO:0005737">
    <property type="term" value="C:cytoplasm"/>
    <property type="evidence" value="ECO:0000250"/>
    <property type="project" value="UniProtKB"/>
</dbReference>
<dbReference type="GO" id="GO:0005829">
    <property type="term" value="C:cytosol"/>
    <property type="evidence" value="ECO:0007669"/>
    <property type="project" value="UniProtKB-SubCell"/>
</dbReference>
<dbReference type="GO" id="GO:0005783">
    <property type="term" value="C:endoplasmic reticulum"/>
    <property type="evidence" value="ECO:0000250"/>
    <property type="project" value="UniProtKB"/>
</dbReference>
<dbReference type="GO" id="GO:0005789">
    <property type="term" value="C:endoplasmic reticulum membrane"/>
    <property type="evidence" value="ECO:0000250"/>
    <property type="project" value="UniProtKB"/>
</dbReference>
<dbReference type="GO" id="GO:0005634">
    <property type="term" value="C:nucleus"/>
    <property type="evidence" value="ECO:0000250"/>
    <property type="project" value="UniProtKB"/>
</dbReference>
<dbReference type="GO" id="GO:0035861">
    <property type="term" value="C:site of double-strand break"/>
    <property type="evidence" value="ECO:0000250"/>
    <property type="project" value="UniProtKB"/>
</dbReference>
<dbReference type="GO" id="GO:0061666">
    <property type="term" value="F:UFM1 ligase activity"/>
    <property type="evidence" value="ECO:0000250"/>
    <property type="project" value="UniProtKB"/>
</dbReference>
<dbReference type="GO" id="GO:0071568">
    <property type="term" value="F:UFM1 transferase activity"/>
    <property type="evidence" value="ECO:0000318"/>
    <property type="project" value="GO_Central"/>
</dbReference>
<dbReference type="GO" id="GO:0000077">
    <property type="term" value="P:DNA damage checkpoint signaling"/>
    <property type="evidence" value="ECO:0000250"/>
    <property type="project" value="UniProtKB"/>
</dbReference>
<dbReference type="GO" id="GO:0006281">
    <property type="term" value="P:DNA repair"/>
    <property type="evidence" value="ECO:0007669"/>
    <property type="project" value="UniProtKB-KW"/>
</dbReference>
<dbReference type="GO" id="GO:0030218">
    <property type="term" value="P:erythrocyte differentiation"/>
    <property type="evidence" value="ECO:0000250"/>
    <property type="project" value="UniProtKB"/>
</dbReference>
<dbReference type="GO" id="GO:0060218">
    <property type="term" value="P:hematopoietic stem cell differentiation"/>
    <property type="evidence" value="ECO:0000250"/>
    <property type="project" value="UniProtKB"/>
</dbReference>
<dbReference type="GO" id="GO:1903895">
    <property type="term" value="P:negative regulation of IRE1-mediated unfolded protein response"/>
    <property type="evidence" value="ECO:0000250"/>
    <property type="project" value="UniProtKB"/>
</dbReference>
<dbReference type="GO" id="GO:0032088">
    <property type="term" value="P:negative regulation of NF-kappaB transcription factor activity"/>
    <property type="evidence" value="ECO:0000250"/>
    <property type="project" value="UniProtKB"/>
</dbReference>
<dbReference type="GO" id="GO:0010508">
    <property type="term" value="P:positive regulation of autophagy"/>
    <property type="evidence" value="ECO:0000250"/>
    <property type="project" value="UniProtKB"/>
</dbReference>
<dbReference type="GO" id="GO:0140501">
    <property type="term" value="P:positive regulation of reticulophagy"/>
    <property type="evidence" value="ECO:0000250"/>
    <property type="project" value="UniProtKB"/>
</dbReference>
<dbReference type="GO" id="GO:0071569">
    <property type="term" value="P:protein ufmylation"/>
    <property type="evidence" value="ECO:0000250"/>
    <property type="project" value="UniProtKB"/>
</dbReference>
<dbReference type="GO" id="GO:0043122">
    <property type="term" value="P:regulation of canonical NF-kappaB signal transduction"/>
    <property type="evidence" value="ECO:0000250"/>
    <property type="project" value="UniProtKB"/>
</dbReference>
<dbReference type="GO" id="GO:0050727">
    <property type="term" value="P:regulation of inflammatory response"/>
    <property type="evidence" value="ECO:0000250"/>
    <property type="project" value="UniProtKB"/>
</dbReference>
<dbReference type="GO" id="GO:0072344">
    <property type="term" value="P:rescue of stalled ribosome"/>
    <property type="evidence" value="ECO:0000250"/>
    <property type="project" value="UniProtKB"/>
</dbReference>
<dbReference type="GO" id="GO:0034976">
    <property type="term" value="P:response to endoplasmic reticulum stress"/>
    <property type="evidence" value="ECO:0000250"/>
    <property type="project" value="UniProtKB"/>
</dbReference>
<dbReference type="GO" id="GO:0061709">
    <property type="term" value="P:reticulophagy"/>
    <property type="evidence" value="ECO:0000250"/>
    <property type="project" value="UniProtKB"/>
</dbReference>
<dbReference type="GO" id="GO:0032790">
    <property type="term" value="P:ribosome disassembly"/>
    <property type="evidence" value="ECO:0000250"/>
    <property type="project" value="UniProtKB"/>
</dbReference>
<dbReference type="InterPro" id="IPR018611">
    <property type="entry name" value="Ufl1"/>
</dbReference>
<dbReference type="InterPro" id="IPR056761">
    <property type="entry name" value="Ufl1-like_C"/>
</dbReference>
<dbReference type="InterPro" id="IPR056580">
    <property type="entry name" value="Ufl1_dom"/>
</dbReference>
<dbReference type="InterPro" id="IPR056579">
    <property type="entry name" value="Ufl1_N"/>
</dbReference>
<dbReference type="PANTHER" id="PTHR31057">
    <property type="entry name" value="E3 UFM1-PROTEIN LIGASE 1"/>
    <property type="match status" value="1"/>
</dbReference>
<dbReference type="PANTHER" id="PTHR31057:SF0">
    <property type="entry name" value="E3 UFM1-PROTEIN LIGASE 1"/>
    <property type="match status" value="1"/>
</dbReference>
<dbReference type="Pfam" id="PF09743">
    <property type="entry name" value="E3_UFM1_ligase"/>
    <property type="match status" value="1"/>
</dbReference>
<dbReference type="Pfam" id="PF23659">
    <property type="entry name" value="UFL1"/>
    <property type="match status" value="1"/>
</dbReference>
<dbReference type="Pfam" id="PF25041">
    <property type="entry name" value="UFL1_C"/>
    <property type="match status" value="1"/>
</dbReference>
<name>UFL1_CHICK</name>
<keyword id="KW-0158">Chromosome</keyword>
<keyword id="KW-0963">Cytoplasm</keyword>
<keyword id="KW-0227">DNA damage</keyword>
<keyword id="KW-0234">DNA repair</keyword>
<keyword id="KW-0256">Endoplasmic reticulum</keyword>
<keyword id="KW-0472">Membrane</keyword>
<keyword id="KW-0539">Nucleus</keyword>
<keyword id="KW-1185">Reference proteome</keyword>
<keyword id="KW-0808">Transferase</keyword>
<keyword id="KW-0833">Ubl conjugation pathway</keyword>
<proteinExistence type="evidence at transcript level"/>
<protein>
    <recommendedName>
        <fullName>E3 UFM1-protein ligase 1</fullName>
        <ecNumber evidence="1">2.3.2.-</ecNumber>
    </recommendedName>
    <alternativeName>
        <fullName evidence="4">E3 UFM1-protein transferase 1</fullName>
    </alternativeName>
</protein>
<comment type="function">
    <text evidence="1">E3 protein ligase that mediates ufmylation, the covalent attachment of the ubiquitin-like modifier UFM1 to lysine residues on target proteins, and which plays a key role in various processes, such as ribosome recycling, response to DNA damage, interferon response or reticulophagy (also called ER-phagy). As part of the UREL complex, plays a key role in ribosome recycling by catalyzing mono-ufmylation of RPL26/uL24 subunit of the 60S ribosome. Ufmylation of RPL26/uL24 occurs on free 60S ribosomes following ribosome dissociation: it weakens the junction between post-termination 60S subunits and SEC61 translocons, promoting release and recycling of the large ribosomal subunit from the endoplasmic reticulum membrane. Ufmylation of RPL26/uL24 and subsequent 60S ribosome recycling either take place after normal termination of translation or after ribosome stalling during cotranslational translocation at the endoplasmic reticulum. Involved in reticulophagy in response to endoplasmic reticulum stress by mediating ufmylation of proteins such as CYB5R3 and RPN1, thereby promoting lysosomal degradation of ufmylated proteins. Ufmylation in response to endoplasmic reticulum stress is essential for processes such as hematopoiesis, blood vessel morphogenesis or inflammatory response.</text>
</comment>
<comment type="subunit">
    <text evidence="1">Catalytic component of the UFM1 ribosome E3 ligase (UREL) complex. Interacts with E2-like enzyme UFC1.</text>
</comment>
<comment type="subcellular location">
    <subcellularLocation>
        <location evidence="1">Endoplasmic reticulum membrane</location>
    </subcellularLocation>
    <subcellularLocation>
        <location evidence="1">Cytoplasm</location>
        <location evidence="1">Cytosol</location>
    </subcellularLocation>
    <subcellularLocation>
        <location evidence="1">Nucleus</location>
    </subcellularLocation>
    <subcellularLocation>
        <location evidence="1">Chromosome</location>
    </subcellularLocation>
    <text evidence="1">Recruited to double-strand breaks by the MRE11-RAD50-NBN (MRN) complex following DNA damage.</text>
</comment>
<comment type="similarity">
    <text evidence="4">Belongs to the UFL1 family.</text>
</comment>
<organism>
    <name type="scientific">Gallus gallus</name>
    <name type="common">Chicken</name>
    <dbReference type="NCBI Taxonomy" id="9031"/>
    <lineage>
        <taxon>Eukaryota</taxon>
        <taxon>Metazoa</taxon>
        <taxon>Chordata</taxon>
        <taxon>Craniata</taxon>
        <taxon>Vertebrata</taxon>
        <taxon>Euteleostomi</taxon>
        <taxon>Archelosauria</taxon>
        <taxon>Archosauria</taxon>
        <taxon>Dinosauria</taxon>
        <taxon>Saurischia</taxon>
        <taxon>Theropoda</taxon>
        <taxon>Coelurosauria</taxon>
        <taxon>Aves</taxon>
        <taxon>Neognathae</taxon>
        <taxon>Galloanserae</taxon>
        <taxon>Galliformes</taxon>
        <taxon>Phasianidae</taxon>
        <taxon>Phasianinae</taxon>
        <taxon>Gallus</taxon>
    </lineage>
</organism>
<sequence>MAADWEEIRRLAADFQRAQFAEAAHRLSERNCIEIVTKLIAEKQLEVVHTLDGKEYVTPAQISKEIWDELSVCGGRINIVDLQQIINVDLLHIENRANDIVKSDKAVQLVLGQLINESYLDQLAEEINDKLQETGQVTISELCKAYDLPGDFLTQALSKRLGRIIHGRLDQENRGVIFTEAFVSRHRARIRGLFSAITRPTPVSNLITRYGFQEHLLYSVLEELVNTSRLKGTVVGGKQDKAVFVPDIYARTQSNWVDSFFKQNGYLEFDALYRLGIPDPAGYIKKRYKSTKLLFLRAACVGQEIVDRVEASVDEVISSGSWIDVATLLPSSLSVEDIGILLQQVMRSLNKNSSGLVFSDTIVVSEKFISSCTDLFSDMMKQKAEKEMKNSPVHLITEEDLKQSYVLENSYTNKKDKKDERRKKATEGSGSVRGGGGGNAREIKIKKTKKKGRKDADSDEESQATGTGRNKQLEFHFMSQEEMQDVLKTHLQDCPEELITELAEHLMRPLTKSYQEVVRSVFTSSTSSSGASGRQTMKDLQEEFSNLYNNIRLFEKGTKYFTDETQTNLAKHLLKTVCTDITNLIFNFLASDSMMTTENYSTITSEVRTKILGKLPEDTRGPLTKLHTSLNGKSLEDFLSYLDAAADICDIMVKKGDKKKERQVLFQHRQALIEQLKVTEDPALVLHLTAVLLFQFSTHCMLHAPGRSVPQIINFLSGKIPEDQHSLLIKYQGLVVKQLISQSKKAEQEDDNKTEEEEGADTIRKELQEITTSVKDLVLRPRKSSVTEE</sequence>
<accession>Q5ZMG1</accession>